<evidence type="ECO:0000250" key="1"/>
<evidence type="ECO:0000255" key="2"/>
<evidence type="ECO:0000269" key="3">
    <source>
    </source>
</evidence>
<evidence type="ECO:0000305" key="4"/>
<feature type="signal peptide" evidence="2">
    <location>
        <begin position="1"/>
        <end position="23"/>
    </location>
</feature>
<feature type="chain" id="PRO_0000274628" description="Serine carboxypeptidase-like 14">
    <location>
        <begin position="24"/>
        <end position="435"/>
    </location>
</feature>
<feature type="active site" evidence="1">
    <location>
        <position position="178"/>
    </location>
</feature>
<feature type="active site" evidence="1">
    <location>
        <position position="360"/>
    </location>
</feature>
<feature type="active site" evidence="1">
    <location>
        <position position="413"/>
    </location>
</feature>
<feature type="glycosylation site" description="N-linked (GlcNAc...) asparagine" evidence="2">
    <location>
        <position position="103"/>
    </location>
</feature>
<feature type="glycosylation site" description="N-linked (GlcNAc...) asparagine" evidence="2">
    <location>
        <position position="344"/>
    </location>
</feature>
<feature type="glycosylation site" description="N-linked (GlcNAc...) asparagine" evidence="2">
    <location>
        <position position="376"/>
    </location>
</feature>
<feature type="disulfide bond" evidence="1">
    <location>
        <begin position="82"/>
        <end position="325"/>
    </location>
</feature>
<feature type="disulfide bond" evidence="1">
    <location>
        <begin position="246"/>
        <end position="260"/>
    </location>
</feature>
<feature type="disulfide bond" evidence="1">
    <location>
        <begin position="284"/>
        <end position="291"/>
    </location>
</feature>
<dbReference type="EC" id="3.4.16.-"/>
<dbReference type="EMBL" id="AC069472">
    <property type="protein sequence ID" value="AAG51078.1"/>
    <property type="molecule type" value="Genomic_DNA"/>
</dbReference>
<dbReference type="EMBL" id="AP002047">
    <property type="protein sequence ID" value="BAB03132.1"/>
    <property type="status" value="ALT_SEQ"/>
    <property type="molecule type" value="Genomic_DNA"/>
</dbReference>
<dbReference type="EMBL" id="CP002686">
    <property type="protein sequence ID" value="AEE75170.1"/>
    <property type="molecule type" value="Genomic_DNA"/>
</dbReference>
<dbReference type="RefSeq" id="NP_187831.1">
    <property type="nucleotide sequence ID" value="NM_112059.2"/>
</dbReference>
<dbReference type="SMR" id="Q9C7D3"/>
<dbReference type="FunCoup" id="Q9C7D3">
    <property type="interactions" value="666"/>
</dbReference>
<dbReference type="STRING" id="3702.Q9C7D3"/>
<dbReference type="ESTHER" id="arath-SCP14">
    <property type="family name" value="Carboxypeptidase_S10"/>
</dbReference>
<dbReference type="MEROPS" id="S10.A02"/>
<dbReference type="GlyCosmos" id="Q9C7D3">
    <property type="glycosylation" value="3 sites, No reported glycans"/>
</dbReference>
<dbReference type="GlyGen" id="Q9C7D3">
    <property type="glycosylation" value="3 sites"/>
</dbReference>
<dbReference type="PaxDb" id="3702-AT3G12230.1"/>
<dbReference type="ProteomicsDB" id="232817"/>
<dbReference type="EnsemblPlants" id="AT3G12230.1">
    <property type="protein sequence ID" value="AT3G12230.1"/>
    <property type="gene ID" value="AT3G12230"/>
</dbReference>
<dbReference type="GeneID" id="820403"/>
<dbReference type="Gramene" id="AT3G12230.1">
    <property type="protein sequence ID" value="AT3G12230.1"/>
    <property type="gene ID" value="AT3G12230"/>
</dbReference>
<dbReference type="KEGG" id="ath:AT3G12230"/>
<dbReference type="Araport" id="AT3G12230"/>
<dbReference type="TAIR" id="AT3G12230">
    <property type="gene designation" value="SCPL14"/>
</dbReference>
<dbReference type="eggNOG" id="KOG1282">
    <property type="taxonomic scope" value="Eukaryota"/>
</dbReference>
<dbReference type="HOGENOM" id="CLU_008523_0_1_1"/>
<dbReference type="InParanoid" id="Q9C7D3"/>
<dbReference type="OMA" id="STEVWIR"/>
<dbReference type="PhylomeDB" id="Q9C7D3"/>
<dbReference type="BioCyc" id="ARA:AT3G12230-MONOMER"/>
<dbReference type="PRO" id="PR:Q9C7D3"/>
<dbReference type="Proteomes" id="UP000006548">
    <property type="component" value="Chromosome 3"/>
</dbReference>
<dbReference type="ExpressionAtlas" id="Q9C7D3">
    <property type="expression patterns" value="baseline and differential"/>
</dbReference>
<dbReference type="GO" id="GO:0005576">
    <property type="term" value="C:extracellular region"/>
    <property type="evidence" value="ECO:0007669"/>
    <property type="project" value="UniProtKB-SubCell"/>
</dbReference>
<dbReference type="GO" id="GO:0004185">
    <property type="term" value="F:serine-type carboxypeptidase activity"/>
    <property type="evidence" value="ECO:0007669"/>
    <property type="project" value="InterPro"/>
</dbReference>
<dbReference type="GO" id="GO:0006508">
    <property type="term" value="P:proteolysis"/>
    <property type="evidence" value="ECO:0007669"/>
    <property type="project" value="UniProtKB-KW"/>
</dbReference>
<dbReference type="FunFam" id="3.40.50.1820:FF:000148">
    <property type="entry name" value="Serine carboxypeptidase-like 11"/>
    <property type="match status" value="1"/>
</dbReference>
<dbReference type="Gene3D" id="3.40.50.1820">
    <property type="entry name" value="alpha/beta hydrolase"/>
    <property type="match status" value="1"/>
</dbReference>
<dbReference type="InterPro" id="IPR029058">
    <property type="entry name" value="AB_hydrolase_fold"/>
</dbReference>
<dbReference type="InterPro" id="IPR001563">
    <property type="entry name" value="Peptidase_S10"/>
</dbReference>
<dbReference type="PANTHER" id="PTHR11802:SF316">
    <property type="entry name" value="SERINE CARBOXYPEPTIDASE-LIKE 14-RELATED"/>
    <property type="match status" value="1"/>
</dbReference>
<dbReference type="PANTHER" id="PTHR11802">
    <property type="entry name" value="SERINE PROTEASE FAMILY S10 SERINE CARBOXYPEPTIDASE"/>
    <property type="match status" value="1"/>
</dbReference>
<dbReference type="Pfam" id="PF00450">
    <property type="entry name" value="Peptidase_S10"/>
    <property type="match status" value="1"/>
</dbReference>
<dbReference type="PRINTS" id="PR00724">
    <property type="entry name" value="CRBOXYPTASEC"/>
</dbReference>
<dbReference type="SUPFAM" id="SSF53474">
    <property type="entry name" value="alpha/beta-Hydrolases"/>
    <property type="match status" value="1"/>
</dbReference>
<protein>
    <recommendedName>
        <fullName>Serine carboxypeptidase-like 14</fullName>
        <ecNumber>3.4.16.-</ecNumber>
    </recommendedName>
</protein>
<name>SCP14_ARATH</name>
<keyword id="KW-0121">Carboxypeptidase</keyword>
<keyword id="KW-1015">Disulfide bond</keyword>
<keyword id="KW-0325">Glycoprotein</keyword>
<keyword id="KW-0378">Hydrolase</keyword>
<keyword id="KW-0645">Protease</keyword>
<keyword id="KW-1185">Reference proteome</keyword>
<keyword id="KW-0964">Secreted</keyword>
<keyword id="KW-0732">Signal</keyword>
<proteinExistence type="evidence at transcript level"/>
<sequence length="435" mass="49020">MGSWIPKLLLLQLVLLLTKHADSSSIIKYLPGFEGPLPFELETGYIGVGDEDEDQMFYYFIKSESNPEEDPLLVWLSGGPGCSSFTGLVYENGPLGFKVEAYNGSIPTLVSTTYSWTKVANIIYLDQPVGAGFSYSRNPFADRPSDTGSAKLVNEFVRKWLAKHPDYFSNPFYVTGNSYSGKVIPAIVQEISNGNYICCKPQINLQGYVIGNPVAYYDHDKDSRIPFAHGVALISDELFESLKRSCGGSYSIVDPLNTECLKLIKDYHKCVSGIYQELILKPKCETTSPDCYTYRYLLSIYWANNEIVRRALKVVEGSKGKWERCDLSVRSNQDIKSSIPYHMNNSIKGYRSLVISGDHDMTIPFLGTQAWIRSLNYSITEKWRPWMILDQVAGYTKTYANKMTLATVKGGGHTLEYKPEENSILFKRWISGQPL</sequence>
<accession>Q9C7D3</accession>
<accession>Q9LHI3</accession>
<comment type="function">
    <text evidence="1">Probable carboxypeptidase.</text>
</comment>
<comment type="subcellular location">
    <subcellularLocation>
        <location evidence="4">Secreted</location>
    </subcellularLocation>
</comment>
<comment type="tissue specificity">
    <text evidence="3">Expressed in senescent leaves.</text>
</comment>
<comment type="similarity">
    <text evidence="4">Belongs to the peptidase S10 family.</text>
</comment>
<comment type="sequence caution" evidence="4">
    <conflict type="erroneous gene model prediction">
        <sequence resource="EMBL-CDS" id="BAB03132"/>
    </conflict>
</comment>
<gene>
    <name type="primary">SCPL14</name>
    <name type="ordered locus">At3g12230</name>
    <name type="ORF">F28J15.110</name>
    <name type="ORF">F28J15.14</name>
</gene>
<reference key="1">
    <citation type="journal article" date="2000" name="Nature">
        <title>Sequence and analysis of chromosome 3 of the plant Arabidopsis thaliana.</title>
        <authorList>
            <person name="Salanoubat M."/>
            <person name="Lemcke K."/>
            <person name="Rieger M."/>
            <person name="Ansorge W."/>
            <person name="Unseld M."/>
            <person name="Fartmann B."/>
            <person name="Valle G."/>
            <person name="Bloecker H."/>
            <person name="Perez-Alonso M."/>
            <person name="Obermaier B."/>
            <person name="Delseny M."/>
            <person name="Boutry M."/>
            <person name="Grivell L.A."/>
            <person name="Mache R."/>
            <person name="Puigdomenech P."/>
            <person name="De Simone V."/>
            <person name="Choisne N."/>
            <person name="Artiguenave F."/>
            <person name="Robert C."/>
            <person name="Brottier P."/>
            <person name="Wincker P."/>
            <person name="Cattolico L."/>
            <person name="Weissenbach J."/>
            <person name="Saurin W."/>
            <person name="Quetier F."/>
            <person name="Schaefer M."/>
            <person name="Mueller-Auer S."/>
            <person name="Gabel C."/>
            <person name="Fuchs M."/>
            <person name="Benes V."/>
            <person name="Wurmbach E."/>
            <person name="Drzonek H."/>
            <person name="Erfle H."/>
            <person name="Jordan N."/>
            <person name="Bangert S."/>
            <person name="Wiedelmann R."/>
            <person name="Kranz H."/>
            <person name="Voss H."/>
            <person name="Holland R."/>
            <person name="Brandt P."/>
            <person name="Nyakatura G."/>
            <person name="Vezzi A."/>
            <person name="D'Angelo M."/>
            <person name="Pallavicini A."/>
            <person name="Toppo S."/>
            <person name="Simionati B."/>
            <person name="Conrad A."/>
            <person name="Hornischer K."/>
            <person name="Kauer G."/>
            <person name="Loehnert T.-H."/>
            <person name="Nordsiek G."/>
            <person name="Reichelt J."/>
            <person name="Scharfe M."/>
            <person name="Schoen O."/>
            <person name="Bargues M."/>
            <person name="Terol J."/>
            <person name="Climent J."/>
            <person name="Navarro P."/>
            <person name="Collado C."/>
            <person name="Perez-Perez A."/>
            <person name="Ottenwaelder B."/>
            <person name="Duchemin D."/>
            <person name="Cooke R."/>
            <person name="Laudie M."/>
            <person name="Berger-Llauro C."/>
            <person name="Purnelle B."/>
            <person name="Masuy D."/>
            <person name="de Haan M."/>
            <person name="Maarse A.C."/>
            <person name="Alcaraz J.-P."/>
            <person name="Cottet A."/>
            <person name="Casacuberta E."/>
            <person name="Monfort A."/>
            <person name="Argiriou A."/>
            <person name="Flores M."/>
            <person name="Liguori R."/>
            <person name="Vitale D."/>
            <person name="Mannhaupt G."/>
            <person name="Haase D."/>
            <person name="Schoof H."/>
            <person name="Rudd S."/>
            <person name="Zaccaria P."/>
            <person name="Mewes H.-W."/>
            <person name="Mayer K.F.X."/>
            <person name="Kaul S."/>
            <person name="Town C.D."/>
            <person name="Koo H.L."/>
            <person name="Tallon L.J."/>
            <person name="Jenkins J."/>
            <person name="Rooney T."/>
            <person name="Rizzo M."/>
            <person name="Walts A."/>
            <person name="Utterback T."/>
            <person name="Fujii C.Y."/>
            <person name="Shea T.P."/>
            <person name="Creasy T.H."/>
            <person name="Haas B."/>
            <person name="Maiti R."/>
            <person name="Wu D."/>
            <person name="Peterson J."/>
            <person name="Van Aken S."/>
            <person name="Pai G."/>
            <person name="Militscher J."/>
            <person name="Sellers P."/>
            <person name="Gill J.E."/>
            <person name="Feldblyum T.V."/>
            <person name="Preuss D."/>
            <person name="Lin X."/>
            <person name="Nierman W.C."/>
            <person name="Salzberg S.L."/>
            <person name="White O."/>
            <person name="Venter J.C."/>
            <person name="Fraser C.M."/>
            <person name="Kaneko T."/>
            <person name="Nakamura Y."/>
            <person name="Sato S."/>
            <person name="Kato T."/>
            <person name="Asamizu E."/>
            <person name="Sasamoto S."/>
            <person name="Kimura T."/>
            <person name="Idesawa K."/>
            <person name="Kawashima K."/>
            <person name="Kishida Y."/>
            <person name="Kiyokawa C."/>
            <person name="Kohara M."/>
            <person name="Matsumoto M."/>
            <person name="Matsuno A."/>
            <person name="Muraki A."/>
            <person name="Nakayama S."/>
            <person name="Nakazaki N."/>
            <person name="Shinpo S."/>
            <person name="Takeuchi C."/>
            <person name="Wada T."/>
            <person name="Watanabe A."/>
            <person name="Yamada M."/>
            <person name="Yasuda M."/>
            <person name="Tabata S."/>
        </authorList>
    </citation>
    <scope>NUCLEOTIDE SEQUENCE [LARGE SCALE GENOMIC DNA]</scope>
    <source>
        <strain>cv. Columbia</strain>
    </source>
</reference>
<reference key="2">
    <citation type="journal article" date="2000" name="DNA Res.">
        <title>Structural analysis of Arabidopsis thaliana chromosome 3. II. Sequence features of the 4,251,695 bp regions covered by 90 P1, TAC and BAC clones.</title>
        <authorList>
            <person name="Kaneko T."/>
            <person name="Katoh T."/>
            <person name="Sato S."/>
            <person name="Nakamura Y."/>
            <person name="Asamizu E."/>
            <person name="Tabata S."/>
        </authorList>
    </citation>
    <scope>NUCLEOTIDE SEQUENCE [LARGE SCALE GENOMIC DNA]</scope>
    <source>
        <strain>cv. Columbia</strain>
    </source>
</reference>
<reference key="3">
    <citation type="journal article" date="2017" name="Plant J.">
        <title>Araport11: a complete reannotation of the Arabidopsis thaliana reference genome.</title>
        <authorList>
            <person name="Cheng C.Y."/>
            <person name="Krishnakumar V."/>
            <person name="Chan A.P."/>
            <person name="Thibaud-Nissen F."/>
            <person name="Schobel S."/>
            <person name="Town C.D."/>
        </authorList>
    </citation>
    <scope>GENOME REANNOTATION</scope>
    <source>
        <strain>cv. Columbia</strain>
    </source>
</reference>
<reference key="4">
    <citation type="journal article" date="2005" name="Plant Physiol.">
        <title>An expression and bioinformatics analysis of the Arabidopsis serine carboxypeptidase-like gene family.</title>
        <authorList>
            <person name="Fraser C.M."/>
            <person name="Rider L.W."/>
            <person name="Chapple C."/>
        </authorList>
    </citation>
    <scope>GENE FAMILY</scope>
    <scope>TISSUE SPECIFICITY</scope>
    <scope>NOMENCLATURE</scope>
</reference>
<organism>
    <name type="scientific">Arabidopsis thaliana</name>
    <name type="common">Mouse-ear cress</name>
    <dbReference type="NCBI Taxonomy" id="3702"/>
    <lineage>
        <taxon>Eukaryota</taxon>
        <taxon>Viridiplantae</taxon>
        <taxon>Streptophyta</taxon>
        <taxon>Embryophyta</taxon>
        <taxon>Tracheophyta</taxon>
        <taxon>Spermatophyta</taxon>
        <taxon>Magnoliopsida</taxon>
        <taxon>eudicotyledons</taxon>
        <taxon>Gunneridae</taxon>
        <taxon>Pentapetalae</taxon>
        <taxon>rosids</taxon>
        <taxon>malvids</taxon>
        <taxon>Brassicales</taxon>
        <taxon>Brassicaceae</taxon>
        <taxon>Camelineae</taxon>
        <taxon>Arabidopsis</taxon>
    </lineage>
</organism>